<protein>
    <recommendedName>
        <fullName evidence="5">Periviscerokinin-1</fullName>
    </recommendedName>
</protein>
<name>PVK1_MIOPA</name>
<keyword id="KW-0027">Amidation</keyword>
<keyword id="KW-0903">Direct protein sequencing</keyword>
<keyword id="KW-0527">Neuropeptide</keyword>
<keyword id="KW-0873">Pyrrolidone carboxylic acid</keyword>
<keyword id="KW-0964">Secreted</keyword>
<accession>P86661</accession>
<sequence>QGLIPFPRV</sequence>
<organism>
    <name type="scientific">Miomantis paykullii</name>
    <name type="common">Egyptian praying mantis</name>
    <dbReference type="NCBI Taxonomy" id="627754"/>
    <lineage>
        <taxon>Eukaryota</taxon>
        <taxon>Metazoa</taxon>
        <taxon>Ecdysozoa</taxon>
        <taxon>Arthropoda</taxon>
        <taxon>Hexapoda</taxon>
        <taxon>Insecta</taxon>
        <taxon>Pterygota</taxon>
        <taxon>Neoptera</taxon>
        <taxon>Polyneoptera</taxon>
        <taxon>Dictyoptera</taxon>
        <taxon>Mantodea</taxon>
        <taxon>Eumantodea</taxon>
        <taxon>Mantoidea</taxon>
        <taxon>Mantidae</taxon>
        <taxon>Miomantinae</taxon>
        <taxon>Miomantini</taxon>
    </lineage>
</organism>
<reference evidence="6" key="1">
    <citation type="journal article" date="2010" name="Peptides">
        <title>CAPA-peptides of praying mantids (Mantodea).</title>
        <authorList>
            <person name="Koehler R."/>
            <person name="Predel R."/>
        </authorList>
    </citation>
    <scope>PROTEIN SEQUENCE</scope>
    <scope>MASS SPECTROMETRY</scope>
    <scope>PYROGLUTAMATE FORMATION AT GLN-1</scope>
    <scope>AMIDATION AT VAL-9</scope>
    <source>
        <tissue evidence="4">Abdominal perisympathetic organs</tissue>
    </source>
</reference>
<evidence type="ECO:0000250" key="1">
    <source>
        <dbReference type="UniProtKB" id="P83923"/>
    </source>
</evidence>
<evidence type="ECO:0000250" key="2">
    <source>
        <dbReference type="UniProtKB" id="P84375"/>
    </source>
</evidence>
<evidence type="ECO:0000255" key="3"/>
<evidence type="ECO:0000269" key="4">
    <source>
    </source>
</evidence>
<evidence type="ECO:0000303" key="5">
    <source>
    </source>
</evidence>
<evidence type="ECO:0000305" key="6"/>
<proteinExistence type="evidence at protein level"/>
<feature type="peptide" id="PRO_0000395572" description="Periviscerokinin-1" evidence="4">
    <location>
        <begin position="1"/>
        <end position="9"/>
    </location>
</feature>
<feature type="modified residue" description="Pyrrolidone carboxylic acid; partial" evidence="4">
    <location>
        <position position="1"/>
    </location>
</feature>
<feature type="modified residue" description="Valine amide" evidence="4">
    <location>
        <position position="9"/>
    </location>
</feature>
<feature type="unsure residue" description="L or I" evidence="4">
    <location>
        <position position="3"/>
    </location>
</feature>
<feature type="unsure residue" description="I or L" evidence="4">
    <location>
        <position position="4"/>
    </location>
</feature>
<dbReference type="GO" id="GO:0005576">
    <property type="term" value="C:extracellular region"/>
    <property type="evidence" value="ECO:0007669"/>
    <property type="project" value="UniProtKB-SubCell"/>
</dbReference>
<dbReference type="GO" id="GO:0007218">
    <property type="term" value="P:neuropeptide signaling pathway"/>
    <property type="evidence" value="ECO:0007669"/>
    <property type="project" value="UniProtKB-KW"/>
</dbReference>
<dbReference type="InterPro" id="IPR013231">
    <property type="entry name" value="Periviscerokinin"/>
</dbReference>
<dbReference type="Pfam" id="PF08259">
    <property type="entry name" value="Periviscerokin"/>
    <property type="match status" value="1"/>
</dbReference>
<comment type="function">
    <text evidence="1">Mediates visceral muscle contractile activity (myotropic activity).</text>
</comment>
<comment type="subcellular location">
    <subcellularLocation>
        <location evidence="2">Secreted</location>
    </subcellularLocation>
</comment>
<comment type="mass spectrometry"/>
<comment type="mass spectrometry">
    <text>With pyroglutamate at Gln-1.</text>
</comment>
<comment type="similarity">
    <text evidence="3">Belongs to the periviscerokinin family.</text>
</comment>